<accession>A7N6K1</accession>
<feature type="chain" id="PRO_1000046811" description="Acyl transferase">
    <location>
        <begin position="1"/>
        <end position="305"/>
    </location>
</feature>
<feature type="active site" description="Charge relay system" evidence="1">
    <location>
        <position position="114"/>
    </location>
</feature>
<feature type="active site" description="Charge relay system" evidence="1">
    <location>
        <position position="211"/>
    </location>
</feature>
<feature type="active site" description="Charge relay system" evidence="1">
    <location>
        <position position="241"/>
    </location>
</feature>
<gene>
    <name evidence="1" type="primary">luxD</name>
    <name type="ordered locus">VIBHAR_06243</name>
</gene>
<sequence>MSNQCKTIAHVLPVNNGQEIHVWETPPKENAPSKNSTILIASGFARRMDHFAGLAEYLSENGFHVFRYDSLHHVGLSSGSIDEFTMTTGKNSLCTVYHWLQTKGTQNIGLIAASLSARVAYEVISDLELSFLITAVGVVNLRDTLEKALGFDYLSLPINELPNDLDFEGHKLGSEVFVRDCFEHHWDTLDSTLDKVANTSVPLIAFTANNDDWVKQEEVYDMLAHIRSGHCKLYSLLGSSHDLGENLVVLRNFYQSVTKAAIAMDGGSLEIDVDFIEPDFEQLTIATVNERRLKAEIESRAPEMA</sequence>
<comment type="function">
    <text evidence="1">Acyl transferase is part of the fatty acid reductase system required for aldehyde biosynthesis; it produces fatty acids for the luminescent reaction.</text>
</comment>
<comment type="pathway">
    <text evidence="1">Lipid metabolism; fatty acid reduction for biolumincescence.</text>
</comment>
<comment type="similarity">
    <text evidence="1">Belongs to the LuxD family.</text>
</comment>
<proteinExistence type="inferred from homology"/>
<keyword id="KW-0012">Acyltransferase</keyword>
<keyword id="KW-0455">Luminescence</keyword>
<keyword id="KW-0808">Transferase</keyword>
<protein>
    <recommendedName>
        <fullName evidence="1">Acyl transferase</fullName>
        <shortName evidence="1">ACT</shortName>
        <ecNumber evidence="1">2.3.1.-</ecNumber>
    </recommendedName>
    <alternativeName>
        <fullName evidence="1">C14ACP-TE</fullName>
    </alternativeName>
    <alternativeName>
        <fullName evidence="1">Myristoyl-ACP-specific thioesterase</fullName>
    </alternativeName>
</protein>
<reference key="1">
    <citation type="submission" date="2007-08" db="EMBL/GenBank/DDBJ databases">
        <authorList>
            <consortium name="The Vibrio harveyi Genome Sequencing Project"/>
            <person name="Bassler B."/>
            <person name="Clifton S.W."/>
            <person name="Fulton L."/>
            <person name="Delehaunty K."/>
            <person name="Fronick C."/>
            <person name="Harrison M."/>
            <person name="Markivic C."/>
            <person name="Fulton R."/>
            <person name="Tin-Wollam A.-M."/>
            <person name="Shah N."/>
            <person name="Pepin K."/>
            <person name="Nash W."/>
            <person name="Thiruvilangam P."/>
            <person name="Bhonagiri V."/>
            <person name="Waters C."/>
            <person name="Tu K.C."/>
            <person name="Irgon J."/>
            <person name="Wilson R.K."/>
        </authorList>
    </citation>
    <scope>NUCLEOTIDE SEQUENCE [LARGE SCALE GENOMIC DNA]</scope>
    <source>
        <strain>ATCC BAA-1116 / BB120</strain>
    </source>
</reference>
<organism>
    <name type="scientific">Vibrio campbellii (strain ATCC BAA-1116)</name>
    <dbReference type="NCBI Taxonomy" id="2902295"/>
    <lineage>
        <taxon>Bacteria</taxon>
        <taxon>Pseudomonadati</taxon>
        <taxon>Pseudomonadota</taxon>
        <taxon>Gammaproteobacteria</taxon>
        <taxon>Vibrionales</taxon>
        <taxon>Vibrionaceae</taxon>
        <taxon>Vibrio</taxon>
    </lineage>
</organism>
<dbReference type="EC" id="2.3.1.-" evidence="1"/>
<dbReference type="EMBL" id="CP000790">
    <property type="protein sequence ID" value="ABU74135.1"/>
    <property type="molecule type" value="Genomic_DNA"/>
</dbReference>
<dbReference type="RefSeq" id="WP_012129722.1">
    <property type="nucleotide sequence ID" value="NC_009784.1"/>
</dbReference>
<dbReference type="SMR" id="A7N6K1"/>
<dbReference type="ESTHER" id="vibha-1luxd">
    <property type="family name" value="Thioesterase_acyl-transferase"/>
</dbReference>
<dbReference type="KEGG" id="vha:VIBHAR_06243"/>
<dbReference type="PATRIC" id="fig|338187.25.peg.4095"/>
<dbReference type="UniPathway" id="UPA00569"/>
<dbReference type="Proteomes" id="UP000008152">
    <property type="component" value="Chromosome II"/>
</dbReference>
<dbReference type="GO" id="GO:0016747">
    <property type="term" value="F:acyltransferase activity, transferring groups other than amino-acyl groups"/>
    <property type="evidence" value="ECO:0007669"/>
    <property type="project" value="UniProtKB-UniRule"/>
</dbReference>
<dbReference type="GO" id="GO:0008218">
    <property type="term" value="P:bioluminescence"/>
    <property type="evidence" value="ECO:0007669"/>
    <property type="project" value="UniProtKB-UniRule"/>
</dbReference>
<dbReference type="GO" id="GO:0006631">
    <property type="term" value="P:fatty acid metabolic process"/>
    <property type="evidence" value="ECO:0007669"/>
    <property type="project" value="InterPro"/>
</dbReference>
<dbReference type="Gene3D" id="3.40.50.1820">
    <property type="entry name" value="alpha/beta hydrolase"/>
    <property type="match status" value="1"/>
</dbReference>
<dbReference type="HAMAP" id="MF_00774">
    <property type="entry name" value="LuxD"/>
    <property type="match status" value="1"/>
</dbReference>
<dbReference type="InterPro" id="IPR029058">
    <property type="entry name" value="AB_hydrolase_fold"/>
</dbReference>
<dbReference type="InterPro" id="IPR003157">
    <property type="entry name" value="LuxD"/>
</dbReference>
<dbReference type="NCBIfam" id="NF010127">
    <property type="entry name" value="PRK13604.1"/>
    <property type="match status" value="1"/>
</dbReference>
<dbReference type="Pfam" id="PF02273">
    <property type="entry name" value="Acyl_transf_2"/>
    <property type="match status" value="1"/>
</dbReference>
<dbReference type="PIRSF" id="PIRSF009416">
    <property type="entry name" value="LuxD"/>
    <property type="match status" value="1"/>
</dbReference>
<dbReference type="SUPFAM" id="SSF53474">
    <property type="entry name" value="alpha/beta-Hydrolases"/>
    <property type="match status" value="1"/>
</dbReference>
<name>LUXD_VIBC1</name>
<evidence type="ECO:0000255" key="1">
    <source>
        <dbReference type="HAMAP-Rule" id="MF_00774"/>
    </source>
</evidence>